<reference key="1">
    <citation type="submission" date="2006-05" db="EMBL/GenBank/DDBJ databases">
        <title>Complete sequence of chromosome of Silicibacter sp. TM1040.</title>
        <authorList>
            <consortium name="US DOE Joint Genome Institute"/>
            <person name="Copeland A."/>
            <person name="Lucas S."/>
            <person name="Lapidus A."/>
            <person name="Barry K."/>
            <person name="Detter J.C."/>
            <person name="Glavina del Rio T."/>
            <person name="Hammon N."/>
            <person name="Israni S."/>
            <person name="Dalin E."/>
            <person name="Tice H."/>
            <person name="Pitluck S."/>
            <person name="Brettin T."/>
            <person name="Bruce D."/>
            <person name="Han C."/>
            <person name="Tapia R."/>
            <person name="Goodwin L."/>
            <person name="Thompson L.S."/>
            <person name="Gilna P."/>
            <person name="Schmutz J."/>
            <person name="Larimer F."/>
            <person name="Land M."/>
            <person name="Hauser L."/>
            <person name="Kyrpides N."/>
            <person name="Kim E."/>
            <person name="Belas R."/>
            <person name="Moran M.A."/>
            <person name="Buchan A."/>
            <person name="Gonzalez J.M."/>
            <person name="Schell M.A."/>
            <person name="Sun F."/>
            <person name="Richardson P."/>
        </authorList>
    </citation>
    <scope>NUCLEOTIDE SEQUENCE [LARGE SCALE GENOMIC DNA]</scope>
    <source>
        <strain>TM1040</strain>
    </source>
</reference>
<sequence length="345" mass="38546">MAEFFNTPGGIAVIILAQTLAVVAFVMISLLFLVYGDRKIWAAVQMRRGPNVVGVYGLLQTVADALKYVVKEVVIPAGSDRTVFILAPLTSFVLAMIAWAVIPFNDTWVLSDINVAILYVFAVSSLEVYGVIMGGWASNSKYPFLGSLRSAAQMISYEVSIGLIIIGVILSTGSMNFGDIVRAQDGDAGLFNWYWLPHFPMVFLFFISCLAETNRPPFDLPEAESELVAGYQVEYSSTPFLLFMAGEYIAIFLMCALTSLLFFGGWLSPVPFLPDSPLWMVAKMAFFFFLFAMVKAITPRYRYDQLMRLGWKVFLPFSLIWVVFVAFAARFEWFWGAFARWSTGG</sequence>
<keyword id="KW-0997">Cell inner membrane</keyword>
<keyword id="KW-1003">Cell membrane</keyword>
<keyword id="KW-0472">Membrane</keyword>
<keyword id="KW-0520">NAD</keyword>
<keyword id="KW-0874">Quinone</keyword>
<keyword id="KW-1185">Reference proteome</keyword>
<keyword id="KW-1278">Translocase</keyword>
<keyword id="KW-0812">Transmembrane</keyword>
<keyword id="KW-1133">Transmembrane helix</keyword>
<keyword id="KW-0830">Ubiquinone</keyword>
<proteinExistence type="inferred from homology"/>
<comment type="function">
    <text evidence="1">NDH-1 shuttles electrons from NADH, via FMN and iron-sulfur (Fe-S) centers, to quinones in the respiratory chain. The immediate electron acceptor for the enzyme in this species is believed to be ubiquinone. Couples the redox reaction to proton translocation (for every two electrons transferred, four hydrogen ions are translocated across the cytoplasmic membrane), and thus conserves the redox energy in a proton gradient. This subunit may bind ubiquinone.</text>
</comment>
<comment type="catalytic activity">
    <reaction evidence="1">
        <text>a quinone + NADH + 5 H(+)(in) = a quinol + NAD(+) + 4 H(+)(out)</text>
        <dbReference type="Rhea" id="RHEA:57888"/>
        <dbReference type="ChEBI" id="CHEBI:15378"/>
        <dbReference type="ChEBI" id="CHEBI:24646"/>
        <dbReference type="ChEBI" id="CHEBI:57540"/>
        <dbReference type="ChEBI" id="CHEBI:57945"/>
        <dbReference type="ChEBI" id="CHEBI:132124"/>
    </reaction>
</comment>
<comment type="subunit">
    <text evidence="1">NDH-1 is composed of 14 different subunits. Subunits NuoA, H, J, K, L, M, N constitute the membrane sector of the complex.</text>
</comment>
<comment type="subcellular location">
    <subcellularLocation>
        <location evidence="1">Cell inner membrane</location>
        <topology evidence="1">Multi-pass membrane protein</topology>
    </subcellularLocation>
</comment>
<comment type="similarity">
    <text evidence="1">Belongs to the complex I subunit 1 family.</text>
</comment>
<dbReference type="EC" id="7.1.1.-" evidence="1"/>
<dbReference type="EMBL" id="CP000377">
    <property type="protein sequence ID" value="ABF63486.1"/>
    <property type="molecule type" value="Genomic_DNA"/>
</dbReference>
<dbReference type="RefSeq" id="WP_011538098.1">
    <property type="nucleotide sequence ID" value="NC_008044.1"/>
</dbReference>
<dbReference type="SMR" id="Q1GIN0"/>
<dbReference type="STRING" id="292414.TM1040_0753"/>
<dbReference type="KEGG" id="sit:TM1040_0753"/>
<dbReference type="eggNOG" id="COG1005">
    <property type="taxonomic scope" value="Bacteria"/>
</dbReference>
<dbReference type="HOGENOM" id="CLU_015134_0_1_5"/>
<dbReference type="OrthoDB" id="9803734at2"/>
<dbReference type="Proteomes" id="UP000000636">
    <property type="component" value="Chromosome"/>
</dbReference>
<dbReference type="GO" id="GO:0005886">
    <property type="term" value="C:plasma membrane"/>
    <property type="evidence" value="ECO:0007669"/>
    <property type="project" value="UniProtKB-SubCell"/>
</dbReference>
<dbReference type="GO" id="GO:0003954">
    <property type="term" value="F:NADH dehydrogenase activity"/>
    <property type="evidence" value="ECO:0007669"/>
    <property type="project" value="TreeGrafter"/>
</dbReference>
<dbReference type="GO" id="GO:0016655">
    <property type="term" value="F:oxidoreductase activity, acting on NAD(P)H, quinone or similar compound as acceptor"/>
    <property type="evidence" value="ECO:0007669"/>
    <property type="project" value="UniProtKB-UniRule"/>
</dbReference>
<dbReference type="GO" id="GO:0048038">
    <property type="term" value="F:quinone binding"/>
    <property type="evidence" value="ECO:0007669"/>
    <property type="project" value="UniProtKB-KW"/>
</dbReference>
<dbReference type="GO" id="GO:0009060">
    <property type="term" value="P:aerobic respiration"/>
    <property type="evidence" value="ECO:0007669"/>
    <property type="project" value="TreeGrafter"/>
</dbReference>
<dbReference type="HAMAP" id="MF_01350">
    <property type="entry name" value="NDH1_NuoH"/>
    <property type="match status" value="1"/>
</dbReference>
<dbReference type="InterPro" id="IPR001694">
    <property type="entry name" value="NADH_UbQ_OxRdtase_su1/FPO"/>
</dbReference>
<dbReference type="InterPro" id="IPR018086">
    <property type="entry name" value="NADH_UbQ_OxRdtase_su1_CS"/>
</dbReference>
<dbReference type="NCBIfam" id="NF004741">
    <property type="entry name" value="PRK06076.1-2"/>
    <property type="match status" value="1"/>
</dbReference>
<dbReference type="NCBIfam" id="NF004745">
    <property type="entry name" value="PRK06076.1-6"/>
    <property type="match status" value="1"/>
</dbReference>
<dbReference type="PANTHER" id="PTHR11432">
    <property type="entry name" value="NADH DEHYDROGENASE SUBUNIT 1"/>
    <property type="match status" value="1"/>
</dbReference>
<dbReference type="PANTHER" id="PTHR11432:SF3">
    <property type="entry name" value="NADH-UBIQUINONE OXIDOREDUCTASE CHAIN 1"/>
    <property type="match status" value="1"/>
</dbReference>
<dbReference type="Pfam" id="PF00146">
    <property type="entry name" value="NADHdh"/>
    <property type="match status" value="1"/>
</dbReference>
<dbReference type="PROSITE" id="PS00667">
    <property type="entry name" value="COMPLEX1_ND1_1"/>
    <property type="match status" value="1"/>
</dbReference>
<dbReference type="PROSITE" id="PS00668">
    <property type="entry name" value="COMPLEX1_ND1_2"/>
    <property type="match status" value="1"/>
</dbReference>
<protein>
    <recommendedName>
        <fullName evidence="1">NADH-quinone oxidoreductase subunit H</fullName>
        <ecNumber evidence="1">7.1.1.-</ecNumber>
    </recommendedName>
    <alternativeName>
        <fullName evidence="1">NADH dehydrogenase I subunit H</fullName>
    </alternativeName>
    <alternativeName>
        <fullName evidence="1">NDH-1 subunit H</fullName>
    </alternativeName>
</protein>
<evidence type="ECO:0000255" key="1">
    <source>
        <dbReference type="HAMAP-Rule" id="MF_01350"/>
    </source>
</evidence>
<accession>Q1GIN0</accession>
<name>NUOH_RUEST</name>
<organism>
    <name type="scientific">Ruegeria sp. (strain TM1040)</name>
    <name type="common">Silicibacter sp.</name>
    <dbReference type="NCBI Taxonomy" id="292414"/>
    <lineage>
        <taxon>Bacteria</taxon>
        <taxon>Pseudomonadati</taxon>
        <taxon>Pseudomonadota</taxon>
        <taxon>Alphaproteobacteria</taxon>
        <taxon>Rhodobacterales</taxon>
        <taxon>Roseobacteraceae</taxon>
        <taxon>Ruegeria</taxon>
    </lineage>
</organism>
<gene>
    <name evidence="1" type="primary">nuoH</name>
    <name type="ordered locus">TM1040_0753</name>
</gene>
<feature type="chain" id="PRO_0000298851" description="NADH-quinone oxidoreductase subunit H">
    <location>
        <begin position="1"/>
        <end position="345"/>
    </location>
</feature>
<feature type="transmembrane region" description="Helical" evidence="1">
    <location>
        <begin position="13"/>
        <end position="33"/>
    </location>
</feature>
<feature type="transmembrane region" description="Helical" evidence="1">
    <location>
        <begin position="84"/>
        <end position="104"/>
    </location>
</feature>
<feature type="transmembrane region" description="Helical" evidence="1">
    <location>
        <begin position="115"/>
        <end position="135"/>
    </location>
</feature>
<feature type="transmembrane region" description="Helical" evidence="1">
    <location>
        <begin position="161"/>
        <end position="181"/>
    </location>
</feature>
<feature type="transmembrane region" description="Helical" evidence="1">
    <location>
        <begin position="190"/>
        <end position="210"/>
    </location>
</feature>
<feature type="transmembrane region" description="Helical" evidence="1">
    <location>
        <begin position="248"/>
        <end position="268"/>
    </location>
</feature>
<feature type="transmembrane region" description="Helical" evidence="1">
    <location>
        <begin position="277"/>
        <end position="297"/>
    </location>
</feature>
<feature type="transmembrane region" description="Helical" evidence="1">
    <location>
        <begin position="309"/>
        <end position="329"/>
    </location>
</feature>